<sequence>MTQLWVERTGTRRYIGRSTRGAQVLVGSEDVDGVFTPGELLKIALAACSGMASDQPLARRLGDDYQAVVKVSGAADRDQERYPLIEETMELDLSGLTEDEKERLLVVINRAVELACTVGRTLKSGTTVNLEVVDVGA</sequence>
<gene>
    <name type="ordered locus">Rv2923c</name>
    <name type="ORF">MTCY338.12c</name>
</gene>
<proteinExistence type="evidence at protein level"/>
<feature type="chain" id="PRO_0000104104" description="Uncharacterized protein Rv2923c">
    <location>
        <begin position="1"/>
        <end position="137"/>
    </location>
</feature>
<dbReference type="EMBL" id="AL123456">
    <property type="protein sequence ID" value="CCP45726.1"/>
    <property type="molecule type" value="Genomic_DNA"/>
</dbReference>
<dbReference type="PIR" id="C70748">
    <property type="entry name" value="C70748"/>
</dbReference>
<dbReference type="RefSeq" id="NP_217439.1">
    <property type="nucleotide sequence ID" value="NC_000962.3"/>
</dbReference>
<dbReference type="RefSeq" id="WP_003414812.1">
    <property type="nucleotide sequence ID" value="NZ_NVQJ01000006.1"/>
</dbReference>
<dbReference type="SMR" id="P9WL19"/>
<dbReference type="STRING" id="83332.Rv2923c"/>
<dbReference type="PaxDb" id="83332-Rv2923c"/>
<dbReference type="DNASU" id="887687"/>
<dbReference type="GeneID" id="887687"/>
<dbReference type="KEGG" id="mtu:Rv2923c"/>
<dbReference type="KEGG" id="mtv:RVBD_2923c"/>
<dbReference type="TubercuList" id="Rv2923c"/>
<dbReference type="eggNOG" id="COG1765">
    <property type="taxonomic scope" value="Bacteria"/>
</dbReference>
<dbReference type="InParanoid" id="P9WL19"/>
<dbReference type="OrthoDB" id="4703953at2"/>
<dbReference type="PhylomeDB" id="P9WL19"/>
<dbReference type="Proteomes" id="UP000001584">
    <property type="component" value="Chromosome"/>
</dbReference>
<dbReference type="GO" id="GO:0005886">
    <property type="term" value="C:plasma membrane"/>
    <property type="evidence" value="ECO:0007005"/>
    <property type="project" value="MTBBASE"/>
</dbReference>
<dbReference type="Gene3D" id="3.30.300.20">
    <property type="match status" value="1"/>
</dbReference>
<dbReference type="InterPro" id="IPR015946">
    <property type="entry name" value="KH_dom-like_a/b"/>
</dbReference>
<dbReference type="InterPro" id="IPR003718">
    <property type="entry name" value="OsmC/Ohr_fam"/>
</dbReference>
<dbReference type="InterPro" id="IPR036102">
    <property type="entry name" value="OsmC/Ohrsf"/>
</dbReference>
<dbReference type="Pfam" id="PF02566">
    <property type="entry name" value="OsmC"/>
    <property type="match status" value="1"/>
</dbReference>
<dbReference type="SUPFAM" id="SSF82784">
    <property type="entry name" value="OsmC-like"/>
    <property type="match status" value="1"/>
</dbReference>
<organism>
    <name type="scientific">Mycobacterium tuberculosis (strain ATCC 25618 / H37Rv)</name>
    <dbReference type="NCBI Taxonomy" id="83332"/>
    <lineage>
        <taxon>Bacteria</taxon>
        <taxon>Bacillati</taxon>
        <taxon>Actinomycetota</taxon>
        <taxon>Actinomycetes</taxon>
        <taxon>Mycobacteriales</taxon>
        <taxon>Mycobacteriaceae</taxon>
        <taxon>Mycobacterium</taxon>
        <taxon>Mycobacterium tuberculosis complex</taxon>
    </lineage>
</organism>
<keyword id="KW-1185">Reference proteome</keyword>
<accession>P9WL19</accession>
<accession>L0TB99</accession>
<accession>P65055</accession>
<accession>Q10971</accession>
<reference key="1">
    <citation type="journal article" date="1998" name="Nature">
        <title>Deciphering the biology of Mycobacterium tuberculosis from the complete genome sequence.</title>
        <authorList>
            <person name="Cole S.T."/>
            <person name="Brosch R."/>
            <person name="Parkhill J."/>
            <person name="Garnier T."/>
            <person name="Churcher C.M."/>
            <person name="Harris D.E."/>
            <person name="Gordon S.V."/>
            <person name="Eiglmeier K."/>
            <person name="Gas S."/>
            <person name="Barry C.E. III"/>
            <person name="Tekaia F."/>
            <person name="Badcock K."/>
            <person name="Basham D."/>
            <person name="Brown D."/>
            <person name="Chillingworth T."/>
            <person name="Connor R."/>
            <person name="Davies R.M."/>
            <person name="Devlin K."/>
            <person name="Feltwell T."/>
            <person name="Gentles S."/>
            <person name="Hamlin N."/>
            <person name="Holroyd S."/>
            <person name="Hornsby T."/>
            <person name="Jagels K."/>
            <person name="Krogh A."/>
            <person name="McLean J."/>
            <person name="Moule S."/>
            <person name="Murphy L.D."/>
            <person name="Oliver S."/>
            <person name="Osborne J."/>
            <person name="Quail M.A."/>
            <person name="Rajandream M.A."/>
            <person name="Rogers J."/>
            <person name="Rutter S."/>
            <person name="Seeger K."/>
            <person name="Skelton S."/>
            <person name="Squares S."/>
            <person name="Squares R."/>
            <person name="Sulston J.E."/>
            <person name="Taylor K."/>
            <person name="Whitehead S."/>
            <person name="Barrell B.G."/>
        </authorList>
    </citation>
    <scope>NUCLEOTIDE SEQUENCE [LARGE SCALE GENOMIC DNA]</scope>
    <source>
        <strain>ATCC 25618 / H37Rv</strain>
    </source>
</reference>
<reference key="2">
    <citation type="journal article" date="2011" name="Mol. Cell. Proteomics">
        <title>Proteogenomic analysis of Mycobacterium tuberculosis by high resolution mass spectrometry.</title>
        <authorList>
            <person name="Kelkar D.S."/>
            <person name="Kumar D."/>
            <person name="Kumar P."/>
            <person name="Balakrishnan L."/>
            <person name="Muthusamy B."/>
            <person name="Yadav A.K."/>
            <person name="Shrivastava P."/>
            <person name="Marimuthu A."/>
            <person name="Anand S."/>
            <person name="Sundaram H."/>
            <person name="Kingsbury R."/>
            <person name="Harsha H.C."/>
            <person name="Nair B."/>
            <person name="Prasad T.S."/>
            <person name="Chauhan D.S."/>
            <person name="Katoch K."/>
            <person name="Katoch V.M."/>
            <person name="Kumar P."/>
            <person name="Chaerkady R."/>
            <person name="Ramachandran S."/>
            <person name="Dash D."/>
            <person name="Pandey A."/>
        </authorList>
    </citation>
    <scope>IDENTIFICATION BY MASS SPECTROMETRY [LARGE SCALE ANALYSIS]</scope>
    <source>
        <strain>ATCC 25618 / H37Rv</strain>
    </source>
</reference>
<name>Y2923_MYCTU</name>
<protein>
    <recommendedName>
        <fullName>Uncharacterized protein Rv2923c</fullName>
    </recommendedName>
</protein>